<protein>
    <recommendedName>
        <fullName>Alpha-amylase-related protein</fullName>
        <ecNumber evidence="2">3.2.1.1</ecNumber>
    </recommendedName>
    <alternativeName>
        <fullName>Amy c6</fullName>
    </alternativeName>
</protein>
<sequence>MFKFATAVILCLAASSTLAQHNPHWWGNRNTIVHLFEWKWSDIAAECENFLGPKGFAGVQVSPVNENIISAGRPWWERYQPISYKLITRSGNEQEFADMVRRCNDVGVRIYVDVLLNHMSGDFDGIAVGTAGSEAEPSKKSYPGVPYSAQDFHPSCEITDWNDRFQVQQCELVGLKDLDQSSEWVRSKLIEFLDHLIELGVAGFRVDAAKHMAADDLSYIYSTISDLNTEHGFPHNARPFIFQEVIDHGHETVSREEYNQLGAVTEFRFSEEIGNAFRGNNALKWLQSWGTGWGFLASGQALTFVDNHDNQRDMGAVLNYKSPKQYKMATAFHLAYPYGISRVMSSFAFDDHDTAPPQDEQERIISPEFDEEGACVNGWICEHRWRQIYAMVGFKNAVRDTELSNWWDNGDSQISFCRGNKGFLAVNNNLYDLSQELQTCLPAGVYCDVICGSLVDGSCTGKSVIVDDSGFGYIHIGSEDFDGVLALHVDARV</sequence>
<reference key="1">
    <citation type="journal article" date="1998" name="Proc. Natl. Acad. Sci. U.S.A.">
        <title>Amyrel, a paralogous gene of the amylase gene family in Drosophila melanogaster and the Sophophora subgenus.</title>
        <authorList>
            <person name="Da Lage J.-L."/>
            <person name="Renard E."/>
            <person name="Chartois F."/>
            <person name="Lemeunier F."/>
            <person name="Cariou M.-L."/>
        </authorList>
    </citation>
    <scope>NUCLEOTIDE SEQUENCE [GENOMIC DNA]</scope>
    <source>
        <strain>Tai 13-1610</strain>
    </source>
</reference>
<reference key="2">
    <citation type="submission" date="2001-10" db="EMBL/GenBank/DDBJ databases">
        <authorList>
            <person name="Da Lage J.-L."/>
            <person name="Alland C."/>
        </authorList>
    </citation>
    <scope>SEQUENCE REVISION TO 134 AND 451</scope>
</reference>
<feature type="signal peptide" evidence="1">
    <location>
        <begin position="1"/>
        <end position="19"/>
    </location>
</feature>
<feature type="chain" id="PRO_0000001368" description="Alpha-amylase-related protein">
    <location>
        <begin position="20"/>
        <end position="493"/>
    </location>
</feature>
<feature type="active site" description="Nucleophile" evidence="2">
    <location>
        <position position="207"/>
    </location>
</feature>
<feature type="active site" description="Proton donor" evidence="2">
    <location>
        <position position="244"/>
    </location>
</feature>
<feature type="binding site" evidence="3">
    <location>
        <position position="117"/>
    </location>
    <ligand>
        <name>Ca(2+)</name>
        <dbReference type="ChEBI" id="CHEBI:29108"/>
    </ligand>
</feature>
<feature type="binding site" evidence="3">
    <location>
        <position position="168"/>
    </location>
    <ligand>
        <name>Ca(2+)</name>
        <dbReference type="ChEBI" id="CHEBI:29108"/>
    </ligand>
</feature>
<feature type="binding site" evidence="3">
    <location>
        <position position="177"/>
    </location>
    <ligand>
        <name>Ca(2+)</name>
        <dbReference type="ChEBI" id="CHEBI:29108"/>
    </ligand>
</feature>
<feature type="binding site" evidence="3">
    <location>
        <position position="205"/>
    </location>
    <ligand>
        <name>chloride</name>
        <dbReference type="ChEBI" id="CHEBI:17996"/>
    </ligand>
</feature>
<feature type="binding site" evidence="3">
    <location>
        <position position="211"/>
    </location>
    <ligand>
        <name>Ca(2+)</name>
        <dbReference type="ChEBI" id="CHEBI:29108"/>
    </ligand>
</feature>
<feature type="binding site" evidence="3">
    <location>
        <position position="307"/>
    </location>
    <ligand>
        <name>chloride</name>
        <dbReference type="ChEBI" id="CHEBI:17996"/>
    </ligand>
</feature>
<feature type="binding site" evidence="3">
    <location>
        <position position="342"/>
    </location>
    <ligand>
        <name>chloride</name>
        <dbReference type="ChEBI" id="CHEBI:17996"/>
    </ligand>
</feature>
<feature type="site" description="Transition state stabilizer" evidence="2">
    <location>
        <position position="309"/>
    </location>
</feature>
<feature type="modified residue" description="Pyrrolidone carboxylic acid" evidence="1">
    <location>
        <position position="20"/>
    </location>
</feature>
<feature type="disulfide bond" evidence="3">
    <location>
        <begin position="47"/>
        <end position="103"/>
    </location>
</feature>
<feature type="disulfide bond" evidence="3">
    <location>
        <begin position="156"/>
        <end position="170"/>
    </location>
</feature>
<feature type="disulfide bond" evidence="3">
    <location>
        <begin position="375"/>
        <end position="381"/>
    </location>
</feature>
<feature type="disulfide bond" evidence="4">
    <location>
        <begin position="417"/>
        <end position="440"/>
    </location>
</feature>
<feature type="disulfide bond" evidence="3">
    <location>
        <begin position="447"/>
        <end position="459"/>
    </location>
</feature>
<evidence type="ECO:0000250" key="1"/>
<evidence type="ECO:0000250" key="2">
    <source>
        <dbReference type="UniProtKB" id="P04746"/>
    </source>
</evidence>
<evidence type="ECO:0000250" key="3">
    <source>
        <dbReference type="UniProtKB" id="P56634"/>
    </source>
</evidence>
<evidence type="ECO:0000255" key="4"/>
<evidence type="ECO:0000305" key="5"/>
<keyword id="KW-0106">Calcium</keyword>
<keyword id="KW-0119">Carbohydrate metabolism</keyword>
<keyword id="KW-0868">Chloride</keyword>
<keyword id="KW-1015">Disulfide bond</keyword>
<keyword id="KW-0326">Glycosidase</keyword>
<keyword id="KW-0378">Hydrolase</keyword>
<keyword id="KW-0479">Metal-binding</keyword>
<keyword id="KW-0873">Pyrrolidone carboxylic acid</keyword>
<keyword id="KW-0964">Secreted</keyword>
<keyword id="KW-0732">Signal</keyword>
<proteinExistence type="inferred from homology"/>
<accession>O18344</accession>
<comment type="catalytic activity">
    <reaction evidence="2">
        <text>Endohydrolysis of (1-&gt;4)-alpha-D-glucosidic linkages in polysaccharides containing three or more (1-&gt;4)-alpha-linked D-glucose units.</text>
        <dbReference type="EC" id="3.2.1.1"/>
    </reaction>
</comment>
<comment type="cofactor">
    <cofactor evidence="3">
        <name>Ca(2+)</name>
        <dbReference type="ChEBI" id="CHEBI:29108"/>
    </cofactor>
    <text evidence="3">Binds 1 Ca(2+) ion per subunit.</text>
</comment>
<comment type="cofactor">
    <cofactor evidence="3">
        <name>chloride</name>
        <dbReference type="ChEBI" id="CHEBI:17996"/>
    </cofactor>
    <text evidence="3">Binds 1 Cl(-) ion per subunit.</text>
</comment>
<comment type="subunit">
    <text evidence="1">Monomer.</text>
</comment>
<comment type="subcellular location">
    <subcellularLocation>
        <location evidence="5">Secreted</location>
    </subcellularLocation>
</comment>
<comment type="similarity">
    <text evidence="5">Belongs to the glycosyl hydrolase 13 family.</text>
</comment>
<name>AMYR_DROAN</name>
<dbReference type="EC" id="3.2.1.1" evidence="2"/>
<dbReference type="EMBL" id="AF024691">
    <property type="protein sequence ID" value="AAC39090.3"/>
    <property type="molecule type" value="Genomic_DNA"/>
</dbReference>
<dbReference type="SMR" id="O18344"/>
<dbReference type="CAZy" id="GH13">
    <property type="family name" value="Glycoside Hydrolase Family 13"/>
</dbReference>
<dbReference type="eggNOG" id="KOG2212">
    <property type="taxonomic scope" value="Eukaryota"/>
</dbReference>
<dbReference type="OrthoDB" id="550577at2759"/>
<dbReference type="GO" id="GO:0005576">
    <property type="term" value="C:extracellular region"/>
    <property type="evidence" value="ECO:0007669"/>
    <property type="project" value="UniProtKB-SubCell"/>
</dbReference>
<dbReference type="GO" id="GO:0004134">
    <property type="term" value="F:4-alpha-glucanotransferase activity"/>
    <property type="evidence" value="ECO:0007669"/>
    <property type="project" value="EnsemblMetazoa"/>
</dbReference>
<dbReference type="GO" id="GO:0004556">
    <property type="term" value="F:alpha-amylase activity"/>
    <property type="evidence" value="ECO:0007669"/>
    <property type="project" value="UniProtKB-EC"/>
</dbReference>
<dbReference type="GO" id="GO:0046872">
    <property type="term" value="F:metal ion binding"/>
    <property type="evidence" value="ECO:0007669"/>
    <property type="project" value="UniProtKB-KW"/>
</dbReference>
<dbReference type="GO" id="GO:0005975">
    <property type="term" value="P:carbohydrate metabolic process"/>
    <property type="evidence" value="ECO:0007669"/>
    <property type="project" value="InterPro"/>
</dbReference>
<dbReference type="CDD" id="cd11317">
    <property type="entry name" value="AmyAc_bac_euk_AmyA"/>
    <property type="match status" value="1"/>
</dbReference>
<dbReference type="FunFam" id="3.20.20.80:FF:000119">
    <property type="entry name" value="Alpha-amylase-related protein"/>
    <property type="match status" value="1"/>
</dbReference>
<dbReference type="Gene3D" id="3.20.20.80">
    <property type="entry name" value="Glycosidases"/>
    <property type="match status" value="1"/>
</dbReference>
<dbReference type="Gene3D" id="2.60.40.1180">
    <property type="entry name" value="Golgi alpha-mannosidase II"/>
    <property type="match status" value="1"/>
</dbReference>
<dbReference type="InterPro" id="IPR006048">
    <property type="entry name" value="A-amylase/branching_C"/>
</dbReference>
<dbReference type="InterPro" id="IPR031319">
    <property type="entry name" value="A-amylase_C"/>
</dbReference>
<dbReference type="InterPro" id="IPR006046">
    <property type="entry name" value="Alpha_amylase"/>
</dbReference>
<dbReference type="InterPro" id="IPR006047">
    <property type="entry name" value="Glyco_hydro_13_cat_dom"/>
</dbReference>
<dbReference type="InterPro" id="IPR013780">
    <property type="entry name" value="Glyco_hydro_b"/>
</dbReference>
<dbReference type="InterPro" id="IPR017853">
    <property type="entry name" value="Glycoside_hydrolase_SF"/>
</dbReference>
<dbReference type="PANTHER" id="PTHR43447">
    <property type="entry name" value="ALPHA-AMYLASE"/>
    <property type="match status" value="1"/>
</dbReference>
<dbReference type="Pfam" id="PF00128">
    <property type="entry name" value="Alpha-amylase"/>
    <property type="match status" value="1"/>
</dbReference>
<dbReference type="Pfam" id="PF02806">
    <property type="entry name" value="Alpha-amylase_C"/>
    <property type="match status" value="1"/>
</dbReference>
<dbReference type="PRINTS" id="PR00110">
    <property type="entry name" value="ALPHAAMYLASE"/>
</dbReference>
<dbReference type="SMART" id="SM00642">
    <property type="entry name" value="Aamy"/>
    <property type="match status" value="1"/>
</dbReference>
<dbReference type="SMART" id="SM00632">
    <property type="entry name" value="Aamy_C"/>
    <property type="match status" value="1"/>
</dbReference>
<dbReference type="SUPFAM" id="SSF51445">
    <property type="entry name" value="(Trans)glycosidases"/>
    <property type="match status" value="1"/>
</dbReference>
<dbReference type="SUPFAM" id="SSF51011">
    <property type="entry name" value="Glycosyl hydrolase domain"/>
    <property type="match status" value="1"/>
</dbReference>
<organism>
    <name type="scientific">Drosophila ananassae</name>
    <name type="common">Fruit fly</name>
    <dbReference type="NCBI Taxonomy" id="7217"/>
    <lineage>
        <taxon>Eukaryota</taxon>
        <taxon>Metazoa</taxon>
        <taxon>Ecdysozoa</taxon>
        <taxon>Arthropoda</taxon>
        <taxon>Hexapoda</taxon>
        <taxon>Insecta</taxon>
        <taxon>Pterygota</taxon>
        <taxon>Neoptera</taxon>
        <taxon>Endopterygota</taxon>
        <taxon>Diptera</taxon>
        <taxon>Brachycera</taxon>
        <taxon>Muscomorpha</taxon>
        <taxon>Ephydroidea</taxon>
        <taxon>Drosophilidae</taxon>
        <taxon>Drosophila</taxon>
        <taxon>Sophophora</taxon>
    </lineage>
</organism>
<gene>
    <name type="primary">Amyrel</name>
    <name type="synonym">Amyc6</name>
</gene>